<protein>
    <recommendedName>
        <fullName evidence="1">Protein nucleotidyltransferase YdiU</fullName>
        <ecNumber evidence="1">2.7.7.-</ecNumber>
    </recommendedName>
    <alternativeName>
        <fullName evidence="1">Protein adenylyltransferase YdiU</fullName>
        <ecNumber evidence="1">2.7.7.108</ecNumber>
    </alternativeName>
    <alternativeName>
        <fullName evidence="1">Protein uridylyltransferase YdiU</fullName>
        <ecNumber evidence="1">2.7.7.-</ecNumber>
    </alternativeName>
</protein>
<gene>
    <name evidence="1" type="primary">ydiU</name>
    <name evidence="1" type="synonym">selO</name>
    <name type="ordered locus">CLJ_B1236</name>
</gene>
<reference key="1">
    <citation type="submission" date="2008-05" db="EMBL/GenBank/DDBJ databases">
        <title>Genome sequence of Clostridium botulinum Ba4 strain 657.</title>
        <authorList>
            <person name="Shrivastava S."/>
            <person name="Brown J.L."/>
            <person name="Bruce D."/>
            <person name="Detter C."/>
            <person name="Munk C."/>
            <person name="Smith L.A."/>
            <person name="Smith T.J."/>
            <person name="Sutton G."/>
            <person name="Brettin T.S."/>
        </authorList>
    </citation>
    <scope>NUCLEOTIDE SEQUENCE [LARGE SCALE GENOMIC DNA]</scope>
    <source>
        <strain>657 / Type Ba4</strain>
    </source>
</reference>
<organism>
    <name type="scientific">Clostridium botulinum (strain 657 / Type Ba4)</name>
    <dbReference type="NCBI Taxonomy" id="515621"/>
    <lineage>
        <taxon>Bacteria</taxon>
        <taxon>Bacillati</taxon>
        <taxon>Bacillota</taxon>
        <taxon>Clostridia</taxon>
        <taxon>Eubacteriales</taxon>
        <taxon>Clostridiaceae</taxon>
        <taxon>Clostridium</taxon>
    </lineage>
</organism>
<name>SELO_CLOB6</name>
<sequence>MKERKVIIKTGLNLENSYTSLPEIFFTRQSPSRVPSPKLAVLNYPLITSLGLNAQVLQSADGVDILAGNKIPEEAIPIAQAYAGHQFAHFTMLGDGRALLLGEHITPLGDRFDIQLKGSGKTPYSRGGDGKAALGPMLREYIISEAMNALGIPTTRSLAVVTTGELIMREAELPGAILTRVAASHIRVGTFEYVSRWGTVEELRALADYTLQRHFKKGYDKENPYLFLLQEVIKKQAELIAKWQLVGFVHGVMNTDNMTISGETIDYGPCAFMDVYNPKTVFSSIDIYGRYAYGNQPNIAAWNLARLAETLLPLLNINPNEAIKIAENAVSDFTKLYKNNWLSGMRAKLGIFNEEFQDEYLIEDLLSIMHKYGADYTNTFRALTFDNIEDTVLFDKMEFDKWYKLWQERLTRQEESKLSSKQLMKSSNPSVIPRNHRVEEALEAAVKEGDYSVMEKLLEALSKPYAYSKEQDYYSKLPEPSTCPYQTYCGT</sequence>
<accession>C3KTA3</accession>
<evidence type="ECO:0000255" key="1">
    <source>
        <dbReference type="HAMAP-Rule" id="MF_00692"/>
    </source>
</evidence>
<keyword id="KW-0067">ATP-binding</keyword>
<keyword id="KW-0460">Magnesium</keyword>
<keyword id="KW-0464">Manganese</keyword>
<keyword id="KW-0479">Metal-binding</keyword>
<keyword id="KW-0547">Nucleotide-binding</keyword>
<keyword id="KW-0548">Nucleotidyltransferase</keyword>
<keyword id="KW-0808">Transferase</keyword>
<proteinExistence type="inferred from homology"/>
<feature type="chain" id="PRO_1000212588" description="Protein nucleotidyltransferase YdiU">
    <location>
        <begin position="1"/>
        <end position="491"/>
    </location>
</feature>
<feature type="active site" description="Proton acceptor" evidence="1">
    <location>
        <position position="256"/>
    </location>
</feature>
<feature type="binding site" evidence="1">
    <location>
        <position position="94"/>
    </location>
    <ligand>
        <name>ATP</name>
        <dbReference type="ChEBI" id="CHEBI:30616"/>
    </ligand>
</feature>
<feature type="binding site" evidence="1">
    <location>
        <position position="96"/>
    </location>
    <ligand>
        <name>ATP</name>
        <dbReference type="ChEBI" id="CHEBI:30616"/>
    </ligand>
</feature>
<feature type="binding site" evidence="1">
    <location>
        <position position="97"/>
    </location>
    <ligand>
        <name>ATP</name>
        <dbReference type="ChEBI" id="CHEBI:30616"/>
    </ligand>
</feature>
<feature type="binding site" evidence="1">
    <location>
        <position position="117"/>
    </location>
    <ligand>
        <name>ATP</name>
        <dbReference type="ChEBI" id="CHEBI:30616"/>
    </ligand>
</feature>
<feature type="binding site" evidence="1">
    <location>
        <position position="129"/>
    </location>
    <ligand>
        <name>ATP</name>
        <dbReference type="ChEBI" id="CHEBI:30616"/>
    </ligand>
</feature>
<feature type="binding site" evidence="1">
    <location>
        <position position="130"/>
    </location>
    <ligand>
        <name>ATP</name>
        <dbReference type="ChEBI" id="CHEBI:30616"/>
    </ligand>
</feature>
<feature type="binding site" evidence="1">
    <location>
        <position position="180"/>
    </location>
    <ligand>
        <name>ATP</name>
        <dbReference type="ChEBI" id="CHEBI:30616"/>
    </ligand>
</feature>
<feature type="binding site" evidence="1">
    <location>
        <position position="187"/>
    </location>
    <ligand>
        <name>ATP</name>
        <dbReference type="ChEBI" id="CHEBI:30616"/>
    </ligand>
</feature>
<feature type="binding site" evidence="1">
    <location>
        <position position="257"/>
    </location>
    <ligand>
        <name>Mg(2+)</name>
        <dbReference type="ChEBI" id="CHEBI:18420"/>
    </ligand>
</feature>
<feature type="binding site" evidence="1">
    <location>
        <position position="266"/>
    </location>
    <ligand>
        <name>ATP</name>
        <dbReference type="ChEBI" id="CHEBI:30616"/>
    </ligand>
</feature>
<feature type="binding site" evidence="1">
    <location>
        <position position="266"/>
    </location>
    <ligand>
        <name>Mg(2+)</name>
        <dbReference type="ChEBI" id="CHEBI:18420"/>
    </ligand>
</feature>
<comment type="function">
    <text evidence="1">Nucleotidyltransferase involved in the post-translational modification of proteins. It can catalyze the addition of adenosine monophosphate (AMP) or uridine monophosphate (UMP) to a protein, resulting in modifications known as AMPylation and UMPylation.</text>
</comment>
<comment type="catalytic activity">
    <reaction evidence="1">
        <text>L-seryl-[protein] + ATP = 3-O-(5'-adenylyl)-L-seryl-[protein] + diphosphate</text>
        <dbReference type="Rhea" id="RHEA:58120"/>
        <dbReference type="Rhea" id="RHEA-COMP:9863"/>
        <dbReference type="Rhea" id="RHEA-COMP:15073"/>
        <dbReference type="ChEBI" id="CHEBI:29999"/>
        <dbReference type="ChEBI" id="CHEBI:30616"/>
        <dbReference type="ChEBI" id="CHEBI:33019"/>
        <dbReference type="ChEBI" id="CHEBI:142516"/>
        <dbReference type="EC" id="2.7.7.108"/>
    </reaction>
</comment>
<comment type="catalytic activity">
    <reaction evidence="1">
        <text>L-threonyl-[protein] + ATP = 3-O-(5'-adenylyl)-L-threonyl-[protein] + diphosphate</text>
        <dbReference type="Rhea" id="RHEA:54292"/>
        <dbReference type="Rhea" id="RHEA-COMP:11060"/>
        <dbReference type="Rhea" id="RHEA-COMP:13847"/>
        <dbReference type="ChEBI" id="CHEBI:30013"/>
        <dbReference type="ChEBI" id="CHEBI:30616"/>
        <dbReference type="ChEBI" id="CHEBI:33019"/>
        <dbReference type="ChEBI" id="CHEBI:138113"/>
        <dbReference type="EC" id="2.7.7.108"/>
    </reaction>
</comment>
<comment type="catalytic activity">
    <reaction evidence="1">
        <text>L-tyrosyl-[protein] + ATP = O-(5'-adenylyl)-L-tyrosyl-[protein] + diphosphate</text>
        <dbReference type="Rhea" id="RHEA:54288"/>
        <dbReference type="Rhea" id="RHEA-COMP:10136"/>
        <dbReference type="Rhea" id="RHEA-COMP:13846"/>
        <dbReference type="ChEBI" id="CHEBI:30616"/>
        <dbReference type="ChEBI" id="CHEBI:33019"/>
        <dbReference type="ChEBI" id="CHEBI:46858"/>
        <dbReference type="ChEBI" id="CHEBI:83624"/>
        <dbReference type="EC" id="2.7.7.108"/>
    </reaction>
</comment>
<comment type="catalytic activity">
    <reaction evidence="1">
        <text>L-histidyl-[protein] + UTP = N(tele)-(5'-uridylyl)-L-histidyl-[protein] + diphosphate</text>
        <dbReference type="Rhea" id="RHEA:83891"/>
        <dbReference type="Rhea" id="RHEA-COMP:9745"/>
        <dbReference type="Rhea" id="RHEA-COMP:20239"/>
        <dbReference type="ChEBI" id="CHEBI:29979"/>
        <dbReference type="ChEBI" id="CHEBI:33019"/>
        <dbReference type="ChEBI" id="CHEBI:46398"/>
        <dbReference type="ChEBI" id="CHEBI:233474"/>
    </reaction>
</comment>
<comment type="catalytic activity">
    <reaction evidence="1">
        <text>L-seryl-[protein] + UTP = O-(5'-uridylyl)-L-seryl-[protein] + diphosphate</text>
        <dbReference type="Rhea" id="RHEA:64604"/>
        <dbReference type="Rhea" id="RHEA-COMP:9863"/>
        <dbReference type="Rhea" id="RHEA-COMP:16635"/>
        <dbReference type="ChEBI" id="CHEBI:29999"/>
        <dbReference type="ChEBI" id="CHEBI:33019"/>
        <dbReference type="ChEBI" id="CHEBI:46398"/>
        <dbReference type="ChEBI" id="CHEBI:156051"/>
    </reaction>
</comment>
<comment type="catalytic activity">
    <reaction evidence="1">
        <text>L-tyrosyl-[protein] + UTP = O-(5'-uridylyl)-L-tyrosyl-[protein] + diphosphate</text>
        <dbReference type="Rhea" id="RHEA:83887"/>
        <dbReference type="Rhea" id="RHEA-COMP:10136"/>
        <dbReference type="Rhea" id="RHEA-COMP:20238"/>
        <dbReference type="ChEBI" id="CHEBI:33019"/>
        <dbReference type="ChEBI" id="CHEBI:46398"/>
        <dbReference type="ChEBI" id="CHEBI:46858"/>
        <dbReference type="ChEBI" id="CHEBI:90602"/>
    </reaction>
</comment>
<comment type="cofactor">
    <cofactor evidence="1">
        <name>Mg(2+)</name>
        <dbReference type="ChEBI" id="CHEBI:18420"/>
    </cofactor>
    <cofactor evidence="1">
        <name>Mn(2+)</name>
        <dbReference type="ChEBI" id="CHEBI:29035"/>
    </cofactor>
</comment>
<comment type="similarity">
    <text evidence="1">Belongs to the SELO family.</text>
</comment>
<dbReference type="EC" id="2.7.7.-" evidence="1"/>
<dbReference type="EC" id="2.7.7.108" evidence="1"/>
<dbReference type="EMBL" id="CP001083">
    <property type="protein sequence ID" value="ACQ52289.1"/>
    <property type="molecule type" value="Genomic_DNA"/>
</dbReference>
<dbReference type="RefSeq" id="WP_003361155.1">
    <property type="nucleotide sequence ID" value="NC_012658.1"/>
</dbReference>
<dbReference type="SMR" id="C3KTA3"/>
<dbReference type="KEGG" id="cbi:CLJ_B1236"/>
<dbReference type="HOGENOM" id="CLU_010245_4_1_9"/>
<dbReference type="Proteomes" id="UP000002333">
    <property type="component" value="Chromosome"/>
</dbReference>
<dbReference type="GO" id="GO:0070733">
    <property type="term" value="F:AMPylase activity"/>
    <property type="evidence" value="ECO:0007669"/>
    <property type="project" value="RHEA"/>
</dbReference>
<dbReference type="GO" id="GO:0005524">
    <property type="term" value="F:ATP binding"/>
    <property type="evidence" value="ECO:0007669"/>
    <property type="project" value="UniProtKB-UniRule"/>
</dbReference>
<dbReference type="GO" id="GO:0000287">
    <property type="term" value="F:magnesium ion binding"/>
    <property type="evidence" value="ECO:0007669"/>
    <property type="project" value="UniProtKB-UniRule"/>
</dbReference>
<dbReference type="HAMAP" id="MF_00692">
    <property type="entry name" value="YdiU_SelO"/>
    <property type="match status" value="1"/>
</dbReference>
<dbReference type="InterPro" id="IPR003846">
    <property type="entry name" value="SelO"/>
</dbReference>
<dbReference type="NCBIfam" id="NF000658">
    <property type="entry name" value="PRK00029.1"/>
    <property type="match status" value="1"/>
</dbReference>
<dbReference type="PANTHER" id="PTHR12153:SF15">
    <property type="entry name" value="PROTEIN ADENYLYLTRANSFERASE SELO, MITOCHONDRIAL"/>
    <property type="match status" value="1"/>
</dbReference>
<dbReference type="PANTHER" id="PTHR12153">
    <property type="entry name" value="SELENOPROTEIN O"/>
    <property type="match status" value="1"/>
</dbReference>
<dbReference type="Pfam" id="PF02696">
    <property type="entry name" value="SelO"/>
    <property type="match status" value="1"/>
</dbReference>